<feature type="chain" id="PRO_0000436496" description="Protein PIN-LIKES 1">
    <location>
        <begin position="1"/>
        <end position="472"/>
    </location>
</feature>
<feature type="topological domain" description="Lumenal" evidence="6">
    <location>
        <begin position="1"/>
        <end position="93"/>
    </location>
</feature>
<feature type="transmembrane region" description="Helical" evidence="1">
    <location>
        <begin position="94"/>
        <end position="114"/>
    </location>
</feature>
<feature type="topological domain" description="Cytoplasmic" evidence="6">
    <location>
        <begin position="115"/>
        <end position="133"/>
    </location>
</feature>
<feature type="transmembrane region" description="Helical" evidence="1">
    <location>
        <begin position="134"/>
        <end position="154"/>
    </location>
</feature>
<feature type="topological domain" description="Lumenal" evidence="6">
    <location>
        <begin position="155"/>
        <end position="161"/>
    </location>
</feature>
<feature type="transmembrane region" description="Helical" evidence="1">
    <location>
        <begin position="162"/>
        <end position="182"/>
    </location>
</feature>
<feature type="topological domain" description="Cytoplasmic" evidence="6">
    <location>
        <begin position="183"/>
        <end position="193"/>
    </location>
</feature>
<feature type="transmembrane region" description="Helical" evidence="1">
    <location>
        <begin position="194"/>
        <end position="214"/>
    </location>
</feature>
<feature type="topological domain" description="Lumenal" evidence="6">
    <location>
        <begin position="215"/>
        <end position="231"/>
    </location>
</feature>
<feature type="transmembrane region" description="Helical" evidence="1">
    <location>
        <begin position="232"/>
        <end position="252"/>
    </location>
</feature>
<feature type="topological domain" description="Cytoplasmic" evidence="6">
    <location>
        <begin position="253"/>
        <end position="309"/>
    </location>
</feature>
<feature type="transmembrane region" description="Helical" evidence="1">
    <location>
        <begin position="310"/>
        <end position="330"/>
    </location>
</feature>
<feature type="topological domain" description="Lumenal" evidence="6">
    <location>
        <begin position="331"/>
        <end position="347"/>
    </location>
</feature>
<feature type="transmembrane region" description="Helical" evidence="1">
    <location>
        <begin position="348"/>
        <end position="368"/>
    </location>
</feature>
<feature type="topological domain" description="Cytoplasmic" evidence="6">
    <location>
        <begin position="369"/>
        <end position="379"/>
    </location>
</feature>
<feature type="transmembrane region" description="Helical" evidence="1">
    <location>
        <begin position="380"/>
        <end position="400"/>
    </location>
</feature>
<feature type="topological domain" description="Lumenal" evidence="6">
    <location>
        <begin position="401"/>
        <end position="413"/>
    </location>
</feature>
<feature type="transmembrane region" description="Helical" evidence="1">
    <location>
        <begin position="414"/>
        <end position="434"/>
    </location>
</feature>
<feature type="topological domain" description="Cytoplasmic" evidence="6">
    <location>
        <begin position="435"/>
        <end position="446"/>
    </location>
</feature>
<feature type="transmembrane region" description="Helical" evidence="1">
    <location>
        <begin position="447"/>
        <end position="467"/>
    </location>
</feature>
<feature type="topological domain" description="Lumenal" evidence="6">
    <location>
        <begin position="468"/>
        <end position="472"/>
    </location>
</feature>
<keyword id="KW-0927">Auxin signaling pathway</keyword>
<keyword id="KW-0256">Endoplasmic reticulum</keyword>
<keyword id="KW-0472">Membrane</keyword>
<keyword id="KW-1185">Reference proteome</keyword>
<keyword id="KW-0812">Transmembrane</keyword>
<keyword id="KW-1133">Transmembrane helix</keyword>
<keyword id="KW-0813">Transport</keyword>
<proteinExistence type="evidence at transcript level"/>
<organism evidence="9">
    <name type="scientific">Arabidopsis thaliana</name>
    <name type="common">Mouse-ear cress</name>
    <dbReference type="NCBI Taxonomy" id="3702"/>
    <lineage>
        <taxon>Eukaryota</taxon>
        <taxon>Viridiplantae</taxon>
        <taxon>Streptophyta</taxon>
        <taxon>Embryophyta</taxon>
        <taxon>Tracheophyta</taxon>
        <taxon>Spermatophyta</taxon>
        <taxon>Magnoliopsida</taxon>
        <taxon>eudicotyledons</taxon>
        <taxon>Gunneridae</taxon>
        <taxon>Pentapetalae</taxon>
        <taxon>rosids</taxon>
        <taxon>malvids</taxon>
        <taxon>Brassicales</taxon>
        <taxon>Brassicaceae</taxon>
        <taxon>Camelineae</taxon>
        <taxon>Arabidopsis</taxon>
    </lineage>
</organism>
<gene>
    <name evidence="3" type="primary">PILS1</name>
    <name evidence="7" type="ordered locus">At1g20925</name>
    <name evidence="8" type="ORF">F9H16.9</name>
</gene>
<sequence length="472" mass="51877">MSLTQSAKLHIIHQSIGKITTRLYDTSPFHGDSHCKQRRVKDNCIQFNMNISNVLKCYSEIESFSINQRIRRSISLFLSILRSFYSMRMRLLDLFITSSIPVAKILLITGIGFYLALDQVNILNHDARKQLNNIVFYVFSPSLVASSLSETITYESMVKMWFMPLNVLLTFIIGSFLGWIVIKITKPPSHLRGIIVGCCAAGNLGNMPLIIIPAICNEKGSPFGDPESCEKFGLGYIALSMAIGAIYIWTYVYNLMRMLANPAGETAINSTSSTMPLISPKVEVAEQVGTWGKVKQRVCSVAEKINLRTIFAPSTIAALIALAVGLNPLLRKLLVGNTAPLRVIEDSVSLLGDGAIPVLTLIVGGNLLNGLRGSGINKSVIMGVVVVRYLLLPILGVFIVRGAHYLGLVTSEPLYQFVLLLQYVVPPAMNLGTITQLFGSGESECSVILFWSYALASVSLTVWPTFFMWLVA</sequence>
<accession>F4HWB6</accession>
<accession>Q9SYP5</accession>
<name>PILS1_ARATH</name>
<evidence type="ECO:0000255" key="1"/>
<evidence type="ECO:0000269" key="2">
    <source>
    </source>
</evidence>
<evidence type="ECO:0000303" key="3">
    <source>
    </source>
</evidence>
<evidence type="ECO:0000305" key="4"/>
<evidence type="ECO:0000305" key="5">
    <source>
    </source>
</evidence>
<evidence type="ECO:0000305" key="6">
    <source>
    </source>
</evidence>
<evidence type="ECO:0000312" key="7">
    <source>
        <dbReference type="Araport" id="AT1G20925"/>
    </source>
</evidence>
<evidence type="ECO:0000312" key="8">
    <source>
        <dbReference type="EMBL" id="AAD30600.1"/>
    </source>
</evidence>
<evidence type="ECO:0000312" key="9">
    <source>
        <dbReference type="Proteomes" id="UP000006548"/>
    </source>
</evidence>
<reference key="1">
    <citation type="journal article" date="2000" name="Nature">
        <title>Sequence and analysis of chromosome 1 of the plant Arabidopsis thaliana.</title>
        <authorList>
            <person name="Theologis A."/>
            <person name="Ecker J.R."/>
            <person name="Palm C.J."/>
            <person name="Federspiel N.A."/>
            <person name="Kaul S."/>
            <person name="White O."/>
            <person name="Alonso J."/>
            <person name="Altafi H."/>
            <person name="Araujo R."/>
            <person name="Bowman C.L."/>
            <person name="Brooks S.Y."/>
            <person name="Buehler E."/>
            <person name="Chan A."/>
            <person name="Chao Q."/>
            <person name="Chen H."/>
            <person name="Cheuk R.F."/>
            <person name="Chin C.W."/>
            <person name="Chung M.K."/>
            <person name="Conn L."/>
            <person name="Conway A.B."/>
            <person name="Conway A.R."/>
            <person name="Creasy T.H."/>
            <person name="Dewar K."/>
            <person name="Dunn P."/>
            <person name="Etgu P."/>
            <person name="Feldblyum T.V."/>
            <person name="Feng J.-D."/>
            <person name="Fong B."/>
            <person name="Fujii C.Y."/>
            <person name="Gill J.E."/>
            <person name="Goldsmith A.D."/>
            <person name="Haas B."/>
            <person name="Hansen N.F."/>
            <person name="Hughes B."/>
            <person name="Huizar L."/>
            <person name="Hunter J.L."/>
            <person name="Jenkins J."/>
            <person name="Johnson-Hopson C."/>
            <person name="Khan S."/>
            <person name="Khaykin E."/>
            <person name="Kim C.J."/>
            <person name="Koo H.L."/>
            <person name="Kremenetskaia I."/>
            <person name="Kurtz D.B."/>
            <person name="Kwan A."/>
            <person name="Lam B."/>
            <person name="Langin-Hooper S."/>
            <person name="Lee A."/>
            <person name="Lee J.M."/>
            <person name="Lenz C.A."/>
            <person name="Li J.H."/>
            <person name="Li Y.-P."/>
            <person name="Lin X."/>
            <person name="Liu S.X."/>
            <person name="Liu Z.A."/>
            <person name="Luros J.S."/>
            <person name="Maiti R."/>
            <person name="Marziali A."/>
            <person name="Militscher J."/>
            <person name="Miranda M."/>
            <person name="Nguyen M."/>
            <person name="Nierman W.C."/>
            <person name="Osborne B.I."/>
            <person name="Pai G."/>
            <person name="Peterson J."/>
            <person name="Pham P.K."/>
            <person name="Rizzo M."/>
            <person name="Rooney T."/>
            <person name="Rowley D."/>
            <person name="Sakano H."/>
            <person name="Salzberg S.L."/>
            <person name="Schwartz J.R."/>
            <person name="Shinn P."/>
            <person name="Southwick A.M."/>
            <person name="Sun H."/>
            <person name="Tallon L.J."/>
            <person name="Tambunga G."/>
            <person name="Toriumi M.J."/>
            <person name="Town C.D."/>
            <person name="Utterback T."/>
            <person name="Van Aken S."/>
            <person name="Vaysberg M."/>
            <person name="Vysotskaia V.S."/>
            <person name="Walker M."/>
            <person name="Wu D."/>
            <person name="Yu G."/>
            <person name="Fraser C.M."/>
            <person name="Venter J.C."/>
            <person name="Davis R.W."/>
        </authorList>
    </citation>
    <scope>NUCLEOTIDE SEQUENCE [LARGE SCALE GENOMIC DNA]</scope>
    <source>
        <strain>cv. Columbia</strain>
    </source>
</reference>
<reference key="2">
    <citation type="journal article" date="2017" name="Plant J.">
        <title>Araport11: a complete reannotation of the Arabidopsis thaliana reference genome.</title>
        <authorList>
            <person name="Cheng C.Y."/>
            <person name="Krishnakumar V."/>
            <person name="Chan A.P."/>
            <person name="Thibaud-Nissen F."/>
            <person name="Schobel S."/>
            <person name="Town C.D."/>
        </authorList>
    </citation>
    <scope>GENOME REANNOTATION</scope>
    <source>
        <strain>cv. Columbia</strain>
    </source>
</reference>
<reference key="3">
    <citation type="journal article" date="2012" name="Nature">
        <title>A novel putative auxin carrier family regulates intracellular auxin homeostasis in plants.</title>
        <authorList>
            <person name="Barbez E."/>
            <person name="Kubes M."/>
            <person name="Rolcik J."/>
            <person name="Beziat C."/>
            <person name="Pencik A."/>
            <person name="Wang B."/>
            <person name="Rosquete M.R."/>
            <person name="Zhu J."/>
            <person name="Dobrev P.I."/>
            <person name="Lee Y."/>
            <person name="Zazimalova E."/>
            <person name="Petrasek J."/>
            <person name="Geisler M."/>
            <person name="Friml J."/>
            <person name="Kleine-Vehn J."/>
        </authorList>
    </citation>
    <scope>TISSUE SPECIFICITY</scope>
    <scope>GENE FAMILY</scope>
    <scope>NOMENCLATURE</scope>
    <scope>SUBCELLULAR LOCATION</scope>
</reference>
<reference key="4">
    <citation type="journal article" date="2012" name="Front. Plant Sci.">
        <title>Evolution and structural diversification of PILS putative auxin carriers in plants.</title>
        <authorList>
            <person name="Feraru E."/>
            <person name="Vosolsobe S."/>
            <person name="Feraru M.I."/>
            <person name="Petrasek J."/>
            <person name="Kleine-Vehn J."/>
        </authorList>
    </citation>
    <scope>GENE FAMILY</scope>
    <scope>NOMENCLATURE</scope>
</reference>
<dbReference type="EMBL" id="AC007369">
    <property type="protein sequence ID" value="AAD30600.1"/>
    <property type="status" value="ALT_SEQ"/>
    <property type="molecule type" value="Genomic_DNA"/>
</dbReference>
<dbReference type="EMBL" id="CP002684">
    <property type="protein sequence ID" value="AEE30042.1"/>
    <property type="molecule type" value="Genomic_DNA"/>
</dbReference>
<dbReference type="PIR" id="A86342">
    <property type="entry name" value="A86342"/>
</dbReference>
<dbReference type="RefSeq" id="NP_683316.2">
    <property type="nucleotide sequence ID" value="NM_148475.3"/>
</dbReference>
<dbReference type="SMR" id="F4HWB6"/>
<dbReference type="FunCoup" id="F4HWB6">
    <property type="interactions" value="127"/>
</dbReference>
<dbReference type="STRING" id="3702.F4HWB6"/>
<dbReference type="PaxDb" id="3702-AT1G20925.1"/>
<dbReference type="ProteomicsDB" id="235016"/>
<dbReference type="EnsemblPlants" id="AT1G20925.1">
    <property type="protein sequence ID" value="AT1G20925.1"/>
    <property type="gene ID" value="AT1G20925"/>
</dbReference>
<dbReference type="GeneID" id="838686"/>
<dbReference type="Gramene" id="AT1G20925.1">
    <property type="protein sequence ID" value="AT1G20925.1"/>
    <property type="gene ID" value="AT1G20925"/>
</dbReference>
<dbReference type="KEGG" id="ath:AT1G20925"/>
<dbReference type="Araport" id="AT1G20925"/>
<dbReference type="TAIR" id="AT1G20925">
    <property type="gene designation" value="PILS1"/>
</dbReference>
<dbReference type="eggNOG" id="KOG2722">
    <property type="taxonomic scope" value="Eukaryota"/>
</dbReference>
<dbReference type="HOGENOM" id="CLU_044945_0_0_1"/>
<dbReference type="InParanoid" id="F4HWB6"/>
<dbReference type="OMA" id="ILFWSYA"/>
<dbReference type="PRO" id="PR:F4HWB6"/>
<dbReference type="Proteomes" id="UP000006548">
    <property type="component" value="Chromosome 1"/>
</dbReference>
<dbReference type="ExpressionAtlas" id="F4HWB6">
    <property type="expression patterns" value="baseline and differential"/>
</dbReference>
<dbReference type="GO" id="GO:0005789">
    <property type="term" value="C:endoplasmic reticulum membrane"/>
    <property type="evidence" value="ECO:0000314"/>
    <property type="project" value="UniProtKB"/>
</dbReference>
<dbReference type="GO" id="GO:0009734">
    <property type="term" value="P:auxin-activated signaling pathway"/>
    <property type="evidence" value="ECO:0007669"/>
    <property type="project" value="UniProtKB-KW"/>
</dbReference>
<dbReference type="GO" id="GO:0080162">
    <property type="term" value="P:endoplasmic reticulum to cytosol auxin transport"/>
    <property type="evidence" value="ECO:0007669"/>
    <property type="project" value="InterPro"/>
</dbReference>
<dbReference type="InterPro" id="IPR004776">
    <property type="entry name" value="Mem_transp_PIN-like"/>
</dbReference>
<dbReference type="InterPro" id="IPR045033">
    <property type="entry name" value="PILS1/3/4/5/7"/>
</dbReference>
<dbReference type="PANTHER" id="PTHR31651">
    <property type="match status" value="1"/>
</dbReference>
<dbReference type="PANTHER" id="PTHR31651:SF33">
    <property type="entry name" value="PROTEIN PIN-LIKES 1"/>
    <property type="match status" value="1"/>
</dbReference>
<dbReference type="Pfam" id="PF03547">
    <property type="entry name" value="Mem_trans"/>
    <property type="match status" value="1"/>
</dbReference>
<protein>
    <recommendedName>
        <fullName evidence="3">Protein PIN-LIKES 1</fullName>
    </recommendedName>
    <alternativeName>
        <fullName evidence="3">Auxin efflux carrier-like protein 1</fullName>
    </alternativeName>
</protein>
<comment type="function">
    <text evidence="5">Involved in cellular auxin homeostasis by regulating auxin metabolism. Regulates intracellular auxin accumulation at the endoplasmic reticulum and thus auxin availability for nuclear auxin signaling.</text>
</comment>
<comment type="subcellular location">
    <subcellularLocation>
        <location evidence="2">Endoplasmic reticulum membrane</location>
        <topology evidence="4">Multi-pass membrane protein</topology>
    </subcellularLocation>
</comment>
<comment type="tissue specificity">
    <text evidence="2">Expressed in flowers.</text>
</comment>
<comment type="similarity">
    <text evidence="4">Belongs to the auxin efflux carrier (TC 2.A.69.2) family.</text>
</comment>
<comment type="sequence caution" evidence="4">
    <conflict type="erroneous gene model prediction">
        <sequence resource="EMBL-CDS" id="AAD30600"/>
    </conflict>
</comment>